<evidence type="ECO:0000255" key="1"/>
<evidence type="ECO:0000305" key="2"/>
<accession>O33075</accession>
<accession>O32872</accession>
<name>PR28_MYCLE</name>
<keyword id="KW-1185">Reference proteome</keyword>
<keyword id="KW-0732">Signal</keyword>
<dbReference type="EMBL" id="Z70722">
    <property type="protein sequence ID" value="CAA94726.1"/>
    <property type="molecule type" value="Genomic_DNA"/>
</dbReference>
<dbReference type="EMBL" id="Y14967">
    <property type="protein sequence ID" value="CAA75191.1"/>
    <property type="molecule type" value="Genomic_DNA"/>
</dbReference>
<dbReference type="EMBL" id="AL583917">
    <property type="protein sequence ID" value="CAC29539.1"/>
    <property type="molecule type" value="Genomic_DNA"/>
</dbReference>
<dbReference type="PIR" id="G86912">
    <property type="entry name" value="G86912"/>
</dbReference>
<dbReference type="PIR" id="T10019">
    <property type="entry name" value="T10019"/>
</dbReference>
<dbReference type="RefSeq" id="NP_301155.1">
    <property type="nucleotide sequence ID" value="NC_002677.1"/>
</dbReference>
<dbReference type="RefSeq" id="WP_010907480.1">
    <property type="nucleotide sequence ID" value="NC_002677.1"/>
</dbReference>
<dbReference type="SMR" id="O33075"/>
<dbReference type="STRING" id="272631.gene:17573843"/>
<dbReference type="KEGG" id="mle:ML0031"/>
<dbReference type="PATRIC" id="fig|272631.5.peg.39"/>
<dbReference type="Leproma" id="ML0031"/>
<dbReference type="eggNOG" id="ENOG5031EJ8">
    <property type="taxonomic scope" value="Bacteria"/>
</dbReference>
<dbReference type="HOGENOM" id="CLU_072781_0_0_11"/>
<dbReference type="OrthoDB" id="4752473at2"/>
<dbReference type="Proteomes" id="UP000000806">
    <property type="component" value="Chromosome"/>
</dbReference>
<dbReference type="Gene3D" id="3.40.1000.10">
    <property type="entry name" value="Mog1/PsbP, alpha/beta/alpha sandwich"/>
    <property type="match status" value="1"/>
</dbReference>
<dbReference type="InterPro" id="IPR019674">
    <property type="entry name" value="Lipoprotein_LpqN/LpqT-like"/>
</dbReference>
<dbReference type="Pfam" id="PF10738">
    <property type="entry name" value="Lpp-LpqN"/>
    <property type="match status" value="1"/>
</dbReference>
<reference key="1">
    <citation type="journal article" date="2001" name="Nature">
        <title>Massive gene decay in the leprosy bacillus.</title>
        <authorList>
            <person name="Cole S.T."/>
            <person name="Eiglmeier K."/>
            <person name="Parkhill J."/>
            <person name="James K.D."/>
            <person name="Thomson N.R."/>
            <person name="Wheeler P.R."/>
            <person name="Honore N."/>
            <person name="Garnier T."/>
            <person name="Churcher C.M."/>
            <person name="Harris D.E."/>
            <person name="Mungall K.L."/>
            <person name="Basham D."/>
            <person name="Brown D."/>
            <person name="Chillingworth T."/>
            <person name="Connor R."/>
            <person name="Davies R.M."/>
            <person name="Devlin K."/>
            <person name="Duthoy S."/>
            <person name="Feltwell T."/>
            <person name="Fraser A."/>
            <person name="Hamlin N."/>
            <person name="Holroyd S."/>
            <person name="Hornsby T."/>
            <person name="Jagels K."/>
            <person name="Lacroix C."/>
            <person name="Maclean J."/>
            <person name="Moule S."/>
            <person name="Murphy L.D."/>
            <person name="Oliver K."/>
            <person name="Quail M.A."/>
            <person name="Rajandream M.A."/>
            <person name="Rutherford K.M."/>
            <person name="Rutter S."/>
            <person name="Seeger K."/>
            <person name="Simon S."/>
            <person name="Simmonds M."/>
            <person name="Skelton J."/>
            <person name="Squares R."/>
            <person name="Squares S."/>
            <person name="Stevens K."/>
            <person name="Taylor K."/>
            <person name="Whitehead S."/>
            <person name="Woodward J.R."/>
            <person name="Barrell B.G."/>
        </authorList>
    </citation>
    <scope>NUCLEOTIDE SEQUENCE [LARGE SCALE GENOMIC DNA]</scope>
    <source>
        <strain>TN</strain>
    </source>
</reference>
<comment type="similarity">
    <text evidence="2">To M.tuberculosis Rv0040c.</text>
</comment>
<proteinExistence type="inferred from homology"/>
<feature type="signal peptide" evidence="1">
    <location>
        <begin position="1"/>
        <end position="28"/>
    </location>
</feature>
<feature type="chain" id="PRO_0000022093" description="Proline-rich 28 kDa antigen homolog">
    <location>
        <begin position="29"/>
        <end position="278"/>
    </location>
</feature>
<feature type="sequence conflict" description="In Ref. 1; CAA94726." evidence="2" ref="1">
    <original>AL</original>
    <variation>DI</variation>
    <location>
        <begin position="82"/>
        <end position="83"/>
    </location>
</feature>
<feature type="sequence conflict" description="In Ref. 1; CAA94726." evidence="2" ref="1">
    <original>V</original>
    <variation>L</variation>
    <location>
        <position position="94"/>
    </location>
</feature>
<gene>
    <name type="ordered locus">ML0031</name>
    <name type="ORF">MLB1770.19c</name>
    <name type="ORF">MLCB628.02c</name>
</gene>
<sequence>MIQSTQTWRVLAGGLAATAMGVTVFAGGTAAADPSPPAPPPAIPGVLPPASLPPIQSVTAVPGGITTNNRFVATPQAPGPAALGQPPLAVAAPVSESLHDYFKAKNIKLVAQKPHGFKALDITLPVPTRWTQVPDPNVPDAFAVIADRLGNSLYTSNAQLVVYNLVGNFDPKEAITHGFVDTQQLSAWQTTNASKADFDGFPSSIIEGTYRENGMTLNTSRRHVIASSGPDKYLVSLSVTTALSQAVADAPATNAIVNGFRVSSPTVSAPVPPQLGTR</sequence>
<organism>
    <name type="scientific">Mycobacterium leprae (strain TN)</name>
    <dbReference type="NCBI Taxonomy" id="272631"/>
    <lineage>
        <taxon>Bacteria</taxon>
        <taxon>Bacillati</taxon>
        <taxon>Actinomycetota</taxon>
        <taxon>Actinomycetes</taxon>
        <taxon>Mycobacteriales</taxon>
        <taxon>Mycobacteriaceae</taxon>
        <taxon>Mycobacterium</taxon>
    </lineage>
</organism>
<protein>
    <recommendedName>
        <fullName>Proline-rich 28 kDa antigen homolog</fullName>
    </recommendedName>
</protein>